<gene>
    <name evidence="1" type="primary">trpC</name>
    <name type="ordered locus">MAV_3175</name>
</gene>
<comment type="catalytic activity">
    <reaction evidence="1">
        <text>1-(2-carboxyphenylamino)-1-deoxy-D-ribulose 5-phosphate + H(+) = (1S,2R)-1-C-(indol-3-yl)glycerol 3-phosphate + CO2 + H2O</text>
        <dbReference type="Rhea" id="RHEA:23476"/>
        <dbReference type="ChEBI" id="CHEBI:15377"/>
        <dbReference type="ChEBI" id="CHEBI:15378"/>
        <dbReference type="ChEBI" id="CHEBI:16526"/>
        <dbReference type="ChEBI" id="CHEBI:58613"/>
        <dbReference type="ChEBI" id="CHEBI:58866"/>
        <dbReference type="EC" id="4.1.1.48"/>
    </reaction>
</comment>
<comment type="pathway">
    <text evidence="1">Amino-acid biosynthesis; L-tryptophan biosynthesis; L-tryptophan from chorismate: step 4/5.</text>
</comment>
<comment type="similarity">
    <text evidence="1">Belongs to the TrpC family.</text>
</comment>
<protein>
    <recommendedName>
        <fullName evidence="1">Indole-3-glycerol phosphate synthase</fullName>
        <shortName evidence="1">IGPS</shortName>
        <ecNumber evidence="1">4.1.1.48</ecNumber>
    </recommendedName>
</protein>
<dbReference type="EC" id="4.1.1.48" evidence="1"/>
<dbReference type="EMBL" id="CP000479">
    <property type="protein sequence ID" value="ABK69457.1"/>
    <property type="molecule type" value="Genomic_DNA"/>
</dbReference>
<dbReference type="RefSeq" id="WP_003877736.1">
    <property type="nucleotide sequence ID" value="NC_008595.1"/>
</dbReference>
<dbReference type="SMR" id="A0QHH0"/>
<dbReference type="GeneID" id="75270578"/>
<dbReference type="KEGG" id="mav:MAV_3175"/>
<dbReference type="HOGENOM" id="CLU_034247_0_0_11"/>
<dbReference type="UniPathway" id="UPA00035">
    <property type="reaction ID" value="UER00043"/>
</dbReference>
<dbReference type="Proteomes" id="UP000001574">
    <property type="component" value="Chromosome"/>
</dbReference>
<dbReference type="GO" id="GO:0004425">
    <property type="term" value="F:indole-3-glycerol-phosphate synthase activity"/>
    <property type="evidence" value="ECO:0007669"/>
    <property type="project" value="UniProtKB-UniRule"/>
</dbReference>
<dbReference type="GO" id="GO:0004640">
    <property type="term" value="F:phosphoribosylanthranilate isomerase activity"/>
    <property type="evidence" value="ECO:0007669"/>
    <property type="project" value="TreeGrafter"/>
</dbReference>
<dbReference type="GO" id="GO:0000162">
    <property type="term" value="P:L-tryptophan biosynthetic process"/>
    <property type="evidence" value="ECO:0007669"/>
    <property type="project" value="UniProtKB-UniRule"/>
</dbReference>
<dbReference type="CDD" id="cd00331">
    <property type="entry name" value="IGPS"/>
    <property type="match status" value="1"/>
</dbReference>
<dbReference type="FunFam" id="3.20.20.70:FF:000024">
    <property type="entry name" value="Indole-3-glycerol phosphate synthase"/>
    <property type="match status" value="1"/>
</dbReference>
<dbReference type="Gene3D" id="3.20.20.70">
    <property type="entry name" value="Aldolase class I"/>
    <property type="match status" value="1"/>
</dbReference>
<dbReference type="HAMAP" id="MF_00134_A">
    <property type="entry name" value="IGPS_A"/>
    <property type="match status" value="1"/>
</dbReference>
<dbReference type="HAMAP" id="MF_00134_B">
    <property type="entry name" value="IGPS_B"/>
    <property type="match status" value="1"/>
</dbReference>
<dbReference type="InterPro" id="IPR013785">
    <property type="entry name" value="Aldolase_TIM"/>
</dbReference>
<dbReference type="InterPro" id="IPR045186">
    <property type="entry name" value="Indole-3-glycerol_P_synth"/>
</dbReference>
<dbReference type="InterPro" id="IPR013798">
    <property type="entry name" value="Indole-3-glycerol_P_synth_dom"/>
</dbReference>
<dbReference type="InterPro" id="IPR001468">
    <property type="entry name" value="Indole-3-GlycerolPSynthase_CS"/>
</dbReference>
<dbReference type="InterPro" id="IPR011060">
    <property type="entry name" value="RibuloseP-bd_barrel"/>
</dbReference>
<dbReference type="NCBIfam" id="NF001369">
    <property type="entry name" value="PRK00278.1-1"/>
    <property type="match status" value="1"/>
</dbReference>
<dbReference type="NCBIfam" id="NF001377">
    <property type="entry name" value="PRK00278.2-4"/>
    <property type="match status" value="1"/>
</dbReference>
<dbReference type="PANTHER" id="PTHR22854:SF2">
    <property type="entry name" value="INDOLE-3-GLYCEROL-PHOSPHATE SYNTHASE"/>
    <property type="match status" value="1"/>
</dbReference>
<dbReference type="PANTHER" id="PTHR22854">
    <property type="entry name" value="TRYPTOPHAN BIOSYNTHESIS PROTEIN"/>
    <property type="match status" value="1"/>
</dbReference>
<dbReference type="Pfam" id="PF00218">
    <property type="entry name" value="IGPS"/>
    <property type="match status" value="1"/>
</dbReference>
<dbReference type="SUPFAM" id="SSF51366">
    <property type="entry name" value="Ribulose-phoshate binding barrel"/>
    <property type="match status" value="1"/>
</dbReference>
<dbReference type="PROSITE" id="PS00614">
    <property type="entry name" value="IGPS"/>
    <property type="match status" value="1"/>
</dbReference>
<accession>A0QHH0</accession>
<evidence type="ECO:0000255" key="1">
    <source>
        <dbReference type="HAMAP-Rule" id="MF_00134"/>
    </source>
</evidence>
<organism>
    <name type="scientific">Mycobacterium avium (strain 104)</name>
    <dbReference type="NCBI Taxonomy" id="243243"/>
    <lineage>
        <taxon>Bacteria</taxon>
        <taxon>Bacillati</taxon>
        <taxon>Actinomycetota</taxon>
        <taxon>Actinomycetes</taxon>
        <taxon>Mycobacteriales</taxon>
        <taxon>Mycobacteriaceae</taxon>
        <taxon>Mycobacterium</taxon>
        <taxon>Mycobacterium avium complex (MAC)</taxon>
    </lineage>
</organism>
<name>TRPC_MYCA1</name>
<proteinExistence type="inferred from homology"/>
<reference key="1">
    <citation type="submission" date="2006-10" db="EMBL/GenBank/DDBJ databases">
        <authorList>
            <person name="Fleischmann R.D."/>
            <person name="Dodson R.J."/>
            <person name="Haft D.H."/>
            <person name="Merkel J.S."/>
            <person name="Nelson W.C."/>
            <person name="Fraser C.M."/>
        </authorList>
    </citation>
    <scope>NUCLEOTIDE SEQUENCE [LARGE SCALE GENOMIC DNA]</scope>
    <source>
        <strain>104</strain>
    </source>
</reference>
<sequence>MSPATVLDSILEGVRADVAAREALISLSEIKAAAAAAPPPLDVMAALREPGIGVIAEVKRASPSAGSLATIADPAKLARAYEDGGARIISVLTEERRFHGSLDDLDAVRAAVSIPVLRKDFVVQPYQIHEARAHGADMLLLIVAALEQSALVSMLDRTESLGMTALVEVHTEEEADRALRAGAKVIGVNARDLATLEVDRDCFARIAPGLPSNVIRIAESGVRGTGDLLAYAGAGADAVLVGEGLVKSGDPRAAVADLVTAGTHPSCPKPAR</sequence>
<keyword id="KW-0028">Amino-acid biosynthesis</keyword>
<keyword id="KW-0057">Aromatic amino acid biosynthesis</keyword>
<keyword id="KW-0210">Decarboxylase</keyword>
<keyword id="KW-0456">Lyase</keyword>
<keyword id="KW-0822">Tryptophan biosynthesis</keyword>
<feature type="chain" id="PRO_1000018498" description="Indole-3-glycerol phosphate synthase">
    <location>
        <begin position="1"/>
        <end position="272"/>
    </location>
</feature>